<keyword id="KW-0004">4Fe-4S</keyword>
<keyword id="KW-0408">Iron</keyword>
<keyword id="KW-0411">Iron-sulfur</keyword>
<keyword id="KW-0479">Metal-binding</keyword>
<keyword id="KW-0560">Oxidoreductase</keyword>
<keyword id="KW-0884">PQQ biosynthesis</keyword>
<keyword id="KW-1185">Reference proteome</keyword>
<keyword id="KW-0949">S-adenosyl-L-methionine</keyword>
<proteinExistence type="inferred from homology"/>
<name>PQQE_METCA</name>
<protein>
    <recommendedName>
        <fullName evidence="1">PqqA peptide cyclase</fullName>
        <ecNumber evidence="1">1.21.98.4</ecNumber>
    </recommendedName>
    <alternativeName>
        <fullName evidence="1">Coenzyme PQQ synthesis protein E</fullName>
    </alternativeName>
    <alternativeName>
        <fullName evidence="1">Pyrroloquinoline quinone biosynthesis protein E</fullName>
    </alternativeName>
</protein>
<organism>
    <name type="scientific">Methylococcus capsulatus (strain ATCC 33009 / NCIMB 11132 / Bath)</name>
    <dbReference type="NCBI Taxonomy" id="243233"/>
    <lineage>
        <taxon>Bacteria</taxon>
        <taxon>Pseudomonadati</taxon>
        <taxon>Pseudomonadota</taxon>
        <taxon>Gammaproteobacteria</taxon>
        <taxon>Methylococcales</taxon>
        <taxon>Methylococcaceae</taxon>
        <taxon>Methylococcus</taxon>
    </lineage>
</organism>
<gene>
    <name evidence="1" type="primary">pqqE</name>
    <name type="ordered locus">MCA1449</name>
</gene>
<comment type="function">
    <text evidence="1">Catalyzes the cross-linking of a glutamate residue and a tyrosine residue in the PqqA protein as part of the biosynthesis of pyrroloquinoline quinone (PQQ).</text>
</comment>
<comment type="catalytic activity">
    <reaction evidence="1">
        <text>[PQQ precursor protein] + S-adenosyl-L-methionine = E-Y cross-linked-[PQQ precursor protein] + 5'-deoxyadenosine + L-methionine + H(+)</text>
        <dbReference type="Rhea" id="RHEA:56836"/>
        <dbReference type="Rhea" id="RHEA-COMP:14800"/>
        <dbReference type="Rhea" id="RHEA-COMP:14801"/>
        <dbReference type="ChEBI" id="CHEBI:15378"/>
        <dbReference type="ChEBI" id="CHEBI:17319"/>
        <dbReference type="ChEBI" id="CHEBI:57844"/>
        <dbReference type="ChEBI" id="CHEBI:59789"/>
        <dbReference type="ChEBI" id="CHEBI:141026"/>
        <dbReference type="ChEBI" id="CHEBI:141027"/>
        <dbReference type="EC" id="1.21.98.4"/>
    </reaction>
</comment>
<comment type="cofactor">
    <cofactor evidence="1">
        <name>[4Fe-4S] cluster</name>
        <dbReference type="ChEBI" id="CHEBI:49883"/>
    </cofactor>
    <text evidence="1">Binds 1 [4Fe-4S] cluster. The cluster is coordinated with 3 cysteines and an exchangeable S-adenosyl-L-methionine.</text>
</comment>
<comment type="pathway">
    <text evidence="1">Cofactor biosynthesis; pyrroloquinoline quinone biosynthesis.</text>
</comment>
<comment type="subunit">
    <text evidence="1">Interacts with PqqD. The interaction is necessary for activity of PqqE.</text>
</comment>
<comment type="similarity">
    <text evidence="1">Belongs to the radical SAM superfamily. PqqE family.</text>
</comment>
<feature type="chain" id="PRO_0000219942" description="PqqA peptide cyclase">
    <location>
        <begin position="1"/>
        <end position="373"/>
    </location>
</feature>
<feature type="domain" description="Radical SAM core" evidence="2">
    <location>
        <begin position="9"/>
        <end position="224"/>
    </location>
</feature>
<feature type="binding site" evidence="1">
    <location>
        <position position="23"/>
    </location>
    <ligand>
        <name>[4Fe-4S] cluster</name>
        <dbReference type="ChEBI" id="CHEBI:49883"/>
        <note>4Fe-4S-S-AdoMet</note>
    </ligand>
</feature>
<feature type="binding site" evidence="1">
    <location>
        <position position="27"/>
    </location>
    <ligand>
        <name>[4Fe-4S] cluster</name>
        <dbReference type="ChEBI" id="CHEBI:49883"/>
        <note>4Fe-4S-S-AdoMet</note>
    </ligand>
</feature>
<feature type="binding site" evidence="1">
    <location>
        <position position="30"/>
    </location>
    <ligand>
        <name>[4Fe-4S] cluster</name>
        <dbReference type="ChEBI" id="CHEBI:49883"/>
        <note>4Fe-4S-S-AdoMet</note>
    </ligand>
</feature>
<dbReference type="EC" id="1.21.98.4" evidence="1"/>
<dbReference type="EMBL" id="AE017282">
    <property type="protein sequence ID" value="AAU92558.1"/>
    <property type="molecule type" value="Genomic_DNA"/>
</dbReference>
<dbReference type="RefSeq" id="WP_010960726.1">
    <property type="nucleotide sequence ID" value="NC_002977.6"/>
</dbReference>
<dbReference type="SMR" id="Q608P0"/>
<dbReference type="STRING" id="243233.MCA1449"/>
<dbReference type="GeneID" id="88223722"/>
<dbReference type="KEGG" id="mca:MCA1449"/>
<dbReference type="eggNOG" id="COG0535">
    <property type="taxonomic scope" value="Bacteria"/>
</dbReference>
<dbReference type="HOGENOM" id="CLU_009273_4_7_6"/>
<dbReference type="UniPathway" id="UPA00539"/>
<dbReference type="Proteomes" id="UP000006821">
    <property type="component" value="Chromosome"/>
</dbReference>
<dbReference type="GO" id="GO:0051539">
    <property type="term" value="F:4 iron, 4 sulfur cluster binding"/>
    <property type="evidence" value="ECO:0007669"/>
    <property type="project" value="UniProtKB-KW"/>
</dbReference>
<dbReference type="GO" id="GO:0009975">
    <property type="term" value="F:cyclase activity"/>
    <property type="evidence" value="ECO:0007669"/>
    <property type="project" value="UniProtKB-UniRule"/>
</dbReference>
<dbReference type="GO" id="GO:0005506">
    <property type="term" value="F:iron ion binding"/>
    <property type="evidence" value="ECO:0007669"/>
    <property type="project" value="UniProtKB-UniRule"/>
</dbReference>
<dbReference type="GO" id="GO:0016491">
    <property type="term" value="F:oxidoreductase activity"/>
    <property type="evidence" value="ECO:0007669"/>
    <property type="project" value="UniProtKB-KW"/>
</dbReference>
<dbReference type="GO" id="GO:1904047">
    <property type="term" value="F:S-adenosyl-L-methionine binding"/>
    <property type="evidence" value="ECO:0007669"/>
    <property type="project" value="UniProtKB-UniRule"/>
</dbReference>
<dbReference type="GO" id="GO:0018189">
    <property type="term" value="P:pyrroloquinoline quinone biosynthetic process"/>
    <property type="evidence" value="ECO:0007669"/>
    <property type="project" value="UniProtKB-UniRule"/>
</dbReference>
<dbReference type="CDD" id="cd01335">
    <property type="entry name" value="Radical_SAM"/>
    <property type="match status" value="1"/>
</dbReference>
<dbReference type="CDD" id="cd21119">
    <property type="entry name" value="SPASM_PqqE"/>
    <property type="match status" value="1"/>
</dbReference>
<dbReference type="FunFam" id="3.20.20.70:FF:000188">
    <property type="entry name" value="Mycofactocin radical SAM maturase MftC"/>
    <property type="match status" value="1"/>
</dbReference>
<dbReference type="Gene3D" id="3.20.20.70">
    <property type="entry name" value="Aldolase class I"/>
    <property type="match status" value="1"/>
</dbReference>
<dbReference type="HAMAP" id="MF_00660">
    <property type="entry name" value="PqqE"/>
    <property type="match status" value="1"/>
</dbReference>
<dbReference type="InterPro" id="IPR023885">
    <property type="entry name" value="4Fe4S-binding_SPASM_dom"/>
</dbReference>
<dbReference type="InterPro" id="IPR013785">
    <property type="entry name" value="Aldolase_TIM"/>
</dbReference>
<dbReference type="InterPro" id="IPR006638">
    <property type="entry name" value="Elp3/MiaA/NifB-like_rSAM"/>
</dbReference>
<dbReference type="InterPro" id="IPR000385">
    <property type="entry name" value="MoaA_NifB_PqqE_Fe-S-bd_CS"/>
</dbReference>
<dbReference type="InterPro" id="IPR011843">
    <property type="entry name" value="PQQ_synth_PqqE_bac"/>
</dbReference>
<dbReference type="InterPro" id="IPR017200">
    <property type="entry name" value="PqqE-like"/>
</dbReference>
<dbReference type="InterPro" id="IPR050377">
    <property type="entry name" value="Radical_SAM_PqqE_MftC-like"/>
</dbReference>
<dbReference type="InterPro" id="IPR007197">
    <property type="entry name" value="rSAM"/>
</dbReference>
<dbReference type="NCBIfam" id="TIGR02109">
    <property type="entry name" value="PQQ_syn_pqqE"/>
    <property type="match status" value="1"/>
</dbReference>
<dbReference type="NCBIfam" id="TIGR04085">
    <property type="entry name" value="rSAM_more_4Fe4S"/>
    <property type="match status" value="1"/>
</dbReference>
<dbReference type="PANTHER" id="PTHR11228:SF7">
    <property type="entry name" value="PQQA PEPTIDE CYCLASE"/>
    <property type="match status" value="1"/>
</dbReference>
<dbReference type="PANTHER" id="PTHR11228">
    <property type="entry name" value="RADICAL SAM DOMAIN PROTEIN"/>
    <property type="match status" value="1"/>
</dbReference>
<dbReference type="Pfam" id="PF13353">
    <property type="entry name" value="Fer4_12"/>
    <property type="match status" value="1"/>
</dbReference>
<dbReference type="Pfam" id="PF04055">
    <property type="entry name" value="Radical_SAM"/>
    <property type="match status" value="1"/>
</dbReference>
<dbReference type="Pfam" id="PF13186">
    <property type="entry name" value="SPASM"/>
    <property type="match status" value="1"/>
</dbReference>
<dbReference type="PIRSF" id="PIRSF037420">
    <property type="entry name" value="PQQ_syn_pqqE"/>
    <property type="match status" value="1"/>
</dbReference>
<dbReference type="SFLD" id="SFLDF00280">
    <property type="entry name" value="coenzyme_PQQ_synthesis_protein"/>
    <property type="match status" value="1"/>
</dbReference>
<dbReference type="SFLD" id="SFLDS00029">
    <property type="entry name" value="Radical_SAM"/>
    <property type="match status" value="1"/>
</dbReference>
<dbReference type="SMART" id="SM00729">
    <property type="entry name" value="Elp3"/>
    <property type="match status" value="1"/>
</dbReference>
<dbReference type="SUPFAM" id="SSF102114">
    <property type="entry name" value="Radical SAM enzymes"/>
    <property type="match status" value="1"/>
</dbReference>
<dbReference type="PROSITE" id="PS01305">
    <property type="entry name" value="MOAA_NIFB_PQQE"/>
    <property type="match status" value="1"/>
</dbReference>
<dbReference type="PROSITE" id="PS51918">
    <property type="entry name" value="RADICAL_SAM"/>
    <property type="match status" value="1"/>
</dbReference>
<sequence length="373" mass="42180">MAGSEKSSLTKPRWLLAELTYACPLQCPYCSNPLDYARLGDELSTEEWKRVLSEARALGAVQLGLSGGEPLTRRDLAEIVTHARQLGYYTNLITSGYGLDEVRIAELKSAGLDHIQVSIQSPEKLLNDELAGTESFEHKLKVARWVKQHGYPMVLCVVIHRQNIHQMQQILEMADELGADYLELANTQYYGWALLNRDHLLPTREQFAEAEAIAQSYKEKVKGRMKIYYVVPDYYEDRPKACMNGWGTTFLTIAPDGMALPCHAARELPGLNCPSVRDFSIREIWYESAAFNRFRSYGWMKEPCRSCPEKEKDFGGCRCQAYLMTGDMADADPVCSKSPHHHRVLEAIASTQRSASDKPLFFRNARNSRALTG</sequence>
<accession>Q608P0</accession>
<reference key="1">
    <citation type="journal article" date="2004" name="PLoS Biol.">
        <title>Genomic insights into methanotrophy: the complete genome sequence of Methylococcus capsulatus (Bath).</title>
        <authorList>
            <person name="Ward N.L."/>
            <person name="Larsen O."/>
            <person name="Sakwa J."/>
            <person name="Bruseth L."/>
            <person name="Khouri H.M."/>
            <person name="Durkin A.S."/>
            <person name="Dimitrov G."/>
            <person name="Jiang L."/>
            <person name="Scanlan D."/>
            <person name="Kang K.H."/>
            <person name="Lewis M.R."/>
            <person name="Nelson K.E."/>
            <person name="Methe B.A."/>
            <person name="Wu M."/>
            <person name="Heidelberg J.F."/>
            <person name="Paulsen I.T."/>
            <person name="Fouts D.E."/>
            <person name="Ravel J."/>
            <person name="Tettelin H."/>
            <person name="Ren Q."/>
            <person name="Read T.D."/>
            <person name="DeBoy R.T."/>
            <person name="Seshadri R."/>
            <person name="Salzberg S.L."/>
            <person name="Jensen H.B."/>
            <person name="Birkeland N.K."/>
            <person name="Nelson W.C."/>
            <person name="Dodson R.J."/>
            <person name="Grindhaug S.H."/>
            <person name="Holt I.E."/>
            <person name="Eidhammer I."/>
            <person name="Jonasen I."/>
            <person name="Vanaken S."/>
            <person name="Utterback T.R."/>
            <person name="Feldblyum T.V."/>
            <person name="Fraser C.M."/>
            <person name="Lillehaug J.R."/>
            <person name="Eisen J.A."/>
        </authorList>
    </citation>
    <scope>NUCLEOTIDE SEQUENCE [LARGE SCALE GENOMIC DNA]</scope>
    <source>
        <strain>ATCC 33009 / NCIMB 11132 / Bath</strain>
    </source>
</reference>
<evidence type="ECO:0000255" key="1">
    <source>
        <dbReference type="HAMAP-Rule" id="MF_00660"/>
    </source>
</evidence>
<evidence type="ECO:0000255" key="2">
    <source>
        <dbReference type="PROSITE-ProRule" id="PRU01266"/>
    </source>
</evidence>